<proteinExistence type="inferred from homology"/>
<comment type="function">
    <text evidence="1">Hydrolyzes ribosome-free peptidyl-tRNAs (with 1 or more amino acids incorporated), which drop off the ribosome during protein synthesis, or as a result of ribosome stalling.</text>
</comment>
<comment type="function">
    <text evidence="1">Catalyzes the release of premature peptidyl moieties from peptidyl-tRNA molecules trapped in stalled 50S ribosomal subunits, and thus maintains levels of free tRNAs and 50S ribosomes.</text>
</comment>
<comment type="catalytic activity">
    <reaction evidence="1">
        <text>an N-acyl-L-alpha-aminoacyl-tRNA + H2O = an N-acyl-L-amino acid + a tRNA + H(+)</text>
        <dbReference type="Rhea" id="RHEA:54448"/>
        <dbReference type="Rhea" id="RHEA-COMP:10123"/>
        <dbReference type="Rhea" id="RHEA-COMP:13883"/>
        <dbReference type="ChEBI" id="CHEBI:15377"/>
        <dbReference type="ChEBI" id="CHEBI:15378"/>
        <dbReference type="ChEBI" id="CHEBI:59874"/>
        <dbReference type="ChEBI" id="CHEBI:78442"/>
        <dbReference type="ChEBI" id="CHEBI:138191"/>
        <dbReference type="EC" id="3.1.1.29"/>
    </reaction>
</comment>
<comment type="subunit">
    <text evidence="1">Monomer.</text>
</comment>
<comment type="subcellular location">
    <subcellularLocation>
        <location evidence="1">Cytoplasm</location>
    </subcellularLocation>
</comment>
<comment type="similarity">
    <text evidence="1">Belongs to the PTH family.</text>
</comment>
<dbReference type="EC" id="3.1.1.29" evidence="1"/>
<dbReference type="EMBL" id="BA000031">
    <property type="protein sequence ID" value="BAC59001.1"/>
    <property type="molecule type" value="Genomic_DNA"/>
</dbReference>
<dbReference type="RefSeq" id="NP_797117.1">
    <property type="nucleotide sequence ID" value="NC_004603.1"/>
</dbReference>
<dbReference type="RefSeq" id="WP_011105710.1">
    <property type="nucleotide sequence ID" value="NC_004603.1"/>
</dbReference>
<dbReference type="SMR" id="Q87RN9"/>
<dbReference type="GeneID" id="1188233"/>
<dbReference type="KEGG" id="vpa:VP0738"/>
<dbReference type="PATRIC" id="fig|223926.6.peg.705"/>
<dbReference type="eggNOG" id="COG0193">
    <property type="taxonomic scope" value="Bacteria"/>
</dbReference>
<dbReference type="HOGENOM" id="CLU_062456_3_1_6"/>
<dbReference type="Proteomes" id="UP000002493">
    <property type="component" value="Chromosome 1"/>
</dbReference>
<dbReference type="GO" id="GO:0005737">
    <property type="term" value="C:cytoplasm"/>
    <property type="evidence" value="ECO:0007669"/>
    <property type="project" value="UniProtKB-SubCell"/>
</dbReference>
<dbReference type="GO" id="GO:0004045">
    <property type="term" value="F:peptidyl-tRNA hydrolase activity"/>
    <property type="evidence" value="ECO:0007669"/>
    <property type="project" value="UniProtKB-UniRule"/>
</dbReference>
<dbReference type="GO" id="GO:0000049">
    <property type="term" value="F:tRNA binding"/>
    <property type="evidence" value="ECO:0007669"/>
    <property type="project" value="UniProtKB-UniRule"/>
</dbReference>
<dbReference type="GO" id="GO:0006515">
    <property type="term" value="P:protein quality control for misfolded or incompletely synthesized proteins"/>
    <property type="evidence" value="ECO:0007669"/>
    <property type="project" value="UniProtKB-UniRule"/>
</dbReference>
<dbReference type="GO" id="GO:0072344">
    <property type="term" value="P:rescue of stalled ribosome"/>
    <property type="evidence" value="ECO:0007669"/>
    <property type="project" value="UniProtKB-UniRule"/>
</dbReference>
<dbReference type="CDD" id="cd00462">
    <property type="entry name" value="PTH"/>
    <property type="match status" value="1"/>
</dbReference>
<dbReference type="FunFam" id="3.40.50.1470:FF:000001">
    <property type="entry name" value="Peptidyl-tRNA hydrolase"/>
    <property type="match status" value="1"/>
</dbReference>
<dbReference type="Gene3D" id="3.40.50.1470">
    <property type="entry name" value="Peptidyl-tRNA hydrolase"/>
    <property type="match status" value="1"/>
</dbReference>
<dbReference type="HAMAP" id="MF_00083">
    <property type="entry name" value="Pept_tRNA_hydro_bact"/>
    <property type="match status" value="1"/>
</dbReference>
<dbReference type="InterPro" id="IPR001328">
    <property type="entry name" value="Pept_tRNA_hydro"/>
</dbReference>
<dbReference type="InterPro" id="IPR018171">
    <property type="entry name" value="Pept_tRNA_hydro_CS"/>
</dbReference>
<dbReference type="InterPro" id="IPR036416">
    <property type="entry name" value="Pept_tRNA_hydro_sf"/>
</dbReference>
<dbReference type="NCBIfam" id="TIGR00447">
    <property type="entry name" value="pth"/>
    <property type="match status" value="1"/>
</dbReference>
<dbReference type="PANTHER" id="PTHR17224">
    <property type="entry name" value="PEPTIDYL-TRNA HYDROLASE"/>
    <property type="match status" value="1"/>
</dbReference>
<dbReference type="PANTHER" id="PTHR17224:SF1">
    <property type="entry name" value="PEPTIDYL-TRNA HYDROLASE"/>
    <property type="match status" value="1"/>
</dbReference>
<dbReference type="Pfam" id="PF01195">
    <property type="entry name" value="Pept_tRNA_hydro"/>
    <property type="match status" value="1"/>
</dbReference>
<dbReference type="SUPFAM" id="SSF53178">
    <property type="entry name" value="Peptidyl-tRNA hydrolase-like"/>
    <property type="match status" value="1"/>
</dbReference>
<dbReference type="PROSITE" id="PS01195">
    <property type="entry name" value="PEPT_TRNA_HYDROL_1"/>
    <property type="match status" value="1"/>
</dbReference>
<dbReference type="PROSITE" id="PS01196">
    <property type="entry name" value="PEPT_TRNA_HYDROL_2"/>
    <property type="match status" value="1"/>
</dbReference>
<gene>
    <name evidence="1" type="primary">pth</name>
    <name type="ordered locus">VP0738</name>
</gene>
<protein>
    <recommendedName>
        <fullName evidence="1">Peptidyl-tRNA hydrolase</fullName>
        <shortName evidence="1">Pth</shortName>
        <ecNumber evidence="1">3.1.1.29</ecNumber>
    </recommendedName>
</protein>
<sequence length="196" mass="21373">MTQPIKLLVGLANPGPEYAKTRHNAGAWVVEELARVHNVTLKNEPKFFGLTGRIMVNGQDLRLLIPTTFMNLSGKAIAALAKFYQIKPEEIMVAHDELDLPPGVAKFKKGGGHGGHNGLRDTISKLGNNKDFYRLRIGIGHPGHKDKVAGFVLGKAPAKEQELLDAAADEAVRSLDILIKDGLSKAQNRLHTFKAE</sequence>
<accession>Q87RN9</accession>
<evidence type="ECO:0000255" key="1">
    <source>
        <dbReference type="HAMAP-Rule" id="MF_00083"/>
    </source>
</evidence>
<organism>
    <name type="scientific">Vibrio parahaemolyticus serotype O3:K6 (strain RIMD 2210633)</name>
    <dbReference type="NCBI Taxonomy" id="223926"/>
    <lineage>
        <taxon>Bacteria</taxon>
        <taxon>Pseudomonadati</taxon>
        <taxon>Pseudomonadota</taxon>
        <taxon>Gammaproteobacteria</taxon>
        <taxon>Vibrionales</taxon>
        <taxon>Vibrionaceae</taxon>
        <taxon>Vibrio</taxon>
    </lineage>
</organism>
<name>PTH_VIBPA</name>
<reference key="1">
    <citation type="journal article" date="2003" name="Lancet">
        <title>Genome sequence of Vibrio parahaemolyticus: a pathogenic mechanism distinct from that of V. cholerae.</title>
        <authorList>
            <person name="Makino K."/>
            <person name="Oshima K."/>
            <person name="Kurokawa K."/>
            <person name="Yokoyama K."/>
            <person name="Uda T."/>
            <person name="Tagomori K."/>
            <person name="Iijima Y."/>
            <person name="Najima M."/>
            <person name="Nakano M."/>
            <person name="Yamashita A."/>
            <person name="Kubota Y."/>
            <person name="Kimura S."/>
            <person name="Yasunaga T."/>
            <person name="Honda T."/>
            <person name="Shinagawa H."/>
            <person name="Hattori M."/>
            <person name="Iida T."/>
        </authorList>
    </citation>
    <scope>NUCLEOTIDE SEQUENCE [LARGE SCALE GENOMIC DNA]</scope>
    <source>
        <strain>RIMD 2210633</strain>
    </source>
</reference>
<feature type="chain" id="PRO_0000187851" description="Peptidyl-tRNA hydrolase">
    <location>
        <begin position="1"/>
        <end position="196"/>
    </location>
</feature>
<feature type="active site" description="Proton acceptor" evidence="1">
    <location>
        <position position="23"/>
    </location>
</feature>
<feature type="binding site" evidence="1">
    <location>
        <position position="18"/>
    </location>
    <ligand>
        <name>tRNA</name>
        <dbReference type="ChEBI" id="CHEBI:17843"/>
    </ligand>
</feature>
<feature type="binding site" evidence="1">
    <location>
        <position position="69"/>
    </location>
    <ligand>
        <name>tRNA</name>
        <dbReference type="ChEBI" id="CHEBI:17843"/>
    </ligand>
</feature>
<feature type="binding site" evidence="1">
    <location>
        <position position="71"/>
    </location>
    <ligand>
        <name>tRNA</name>
        <dbReference type="ChEBI" id="CHEBI:17843"/>
    </ligand>
</feature>
<feature type="binding site" evidence="1">
    <location>
        <position position="117"/>
    </location>
    <ligand>
        <name>tRNA</name>
        <dbReference type="ChEBI" id="CHEBI:17843"/>
    </ligand>
</feature>
<feature type="site" description="Discriminates between blocked and unblocked aminoacyl-tRNA" evidence="1">
    <location>
        <position position="13"/>
    </location>
</feature>
<feature type="site" description="Stabilizes the basic form of H active site to accept a proton" evidence="1">
    <location>
        <position position="96"/>
    </location>
</feature>
<keyword id="KW-0963">Cytoplasm</keyword>
<keyword id="KW-0378">Hydrolase</keyword>
<keyword id="KW-0694">RNA-binding</keyword>
<keyword id="KW-0820">tRNA-binding</keyword>